<dbReference type="EC" id="2.7.7.7" evidence="1"/>
<dbReference type="EC" id="2.7.7.49" evidence="1"/>
<dbReference type="EC" id="3.1.26.4" evidence="1"/>
<dbReference type="EMBL" id="X51970">
    <property type="protein sequence ID" value="CAA36229.1"/>
    <property type="molecule type" value="Genomic_DNA"/>
</dbReference>
<dbReference type="PIR" id="S10382">
    <property type="entry name" value="JDVLKS"/>
</dbReference>
<dbReference type="Proteomes" id="UP000007907">
    <property type="component" value="Segment"/>
</dbReference>
<dbReference type="GO" id="GO:0003677">
    <property type="term" value="F:DNA binding"/>
    <property type="evidence" value="ECO:0007669"/>
    <property type="project" value="UniProtKB-UniRule"/>
</dbReference>
<dbReference type="GO" id="GO:0003887">
    <property type="term" value="F:DNA-directed DNA polymerase activity"/>
    <property type="evidence" value="ECO:0007669"/>
    <property type="project" value="UniProtKB-UniRule"/>
</dbReference>
<dbReference type="GO" id="GO:0046872">
    <property type="term" value="F:metal ion binding"/>
    <property type="evidence" value="ECO:0007669"/>
    <property type="project" value="UniProtKB-UniRule"/>
</dbReference>
<dbReference type="GO" id="GO:0003964">
    <property type="term" value="F:RNA-directed DNA polymerase activity"/>
    <property type="evidence" value="ECO:0007669"/>
    <property type="project" value="UniProtKB-UniRule"/>
</dbReference>
<dbReference type="GO" id="GO:0004523">
    <property type="term" value="F:RNA-DNA hybrid ribonuclease activity"/>
    <property type="evidence" value="ECO:0007669"/>
    <property type="project" value="UniProtKB-UniRule"/>
</dbReference>
<dbReference type="GO" id="GO:0006260">
    <property type="term" value="P:DNA replication"/>
    <property type="evidence" value="ECO:0007669"/>
    <property type="project" value="UniProtKB-UniRule"/>
</dbReference>
<dbReference type="GO" id="GO:0052170">
    <property type="term" value="P:symbiont-mediated suppression of host innate immune response"/>
    <property type="evidence" value="ECO:0007669"/>
    <property type="project" value="UniProtKB-UniRule"/>
</dbReference>
<dbReference type="FunFam" id="3.30.70.270:FF:000009">
    <property type="entry name" value="Protein P"/>
    <property type="match status" value="1"/>
</dbReference>
<dbReference type="Gene3D" id="3.30.70.270">
    <property type="match status" value="1"/>
</dbReference>
<dbReference type="HAMAP" id="MF_04073">
    <property type="entry name" value="HBV_DPOL"/>
    <property type="match status" value="1"/>
</dbReference>
<dbReference type="InterPro" id="IPR043502">
    <property type="entry name" value="DNA/RNA_pol_sf"/>
</dbReference>
<dbReference type="InterPro" id="IPR001462">
    <property type="entry name" value="DNApol_viral_C"/>
</dbReference>
<dbReference type="InterPro" id="IPR000201">
    <property type="entry name" value="DNApol_viral_N"/>
</dbReference>
<dbReference type="InterPro" id="IPR037531">
    <property type="entry name" value="HBV_DPOL"/>
</dbReference>
<dbReference type="InterPro" id="IPR043128">
    <property type="entry name" value="Rev_trsase/Diguanyl_cyclase"/>
</dbReference>
<dbReference type="InterPro" id="IPR000477">
    <property type="entry name" value="RT_dom"/>
</dbReference>
<dbReference type="InterPro" id="IPR051320">
    <property type="entry name" value="Viral_Replic_Matur_Polypro"/>
</dbReference>
<dbReference type="PANTHER" id="PTHR33064:SF29">
    <property type="entry name" value="PEPTIDASE A2 DOMAIN-CONTAINING PROTEIN-RELATED"/>
    <property type="match status" value="1"/>
</dbReference>
<dbReference type="PANTHER" id="PTHR33064">
    <property type="entry name" value="POL PROTEIN"/>
    <property type="match status" value="1"/>
</dbReference>
<dbReference type="Pfam" id="PF00336">
    <property type="entry name" value="DNA_pol_viral_C"/>
    <property type="match status" value="1"/>
</dbReference>
<dbReference type="Pfam" id="PF00242">
    <property type="entry name" value="DNA_pol_viral_N"/>
    <property type="match status" value="1"/>
</dbReference>
<dbReference type="Pfam" id="PF00078">
    <property type="entry name" value="RVT_1"/>
    <property type="match status" value="1"/>
</dbReference>
<dbReference type="SUPFAM" id="SSF56672">
    <property type="entry name" value="DNA/RNA polymerases"/>
    <property type="match status" value="1"/>
</dbReference>
<dbReference type="PROSITE" id="PS50878">
    <property type="entry name" value="RT_POL"/>
    <property type="match status" value="1"/>
</dbReference>
<keyword id="KW-0235">DNA replication</keyword>
<keyword id="KW-0238">DNA-binding</keyword>
<keyword id="KW-0239">DNA-directed DNA polymerase</keyword>
<keyword id="KW-0255">Endonuclease</keyword>
<keyword id="KW-0945">Host-virus interaction</keyword>
<keyword id="KW-0378">Hydrolase</keyword>
<keyword id="KW-1090">Inhibition of host innate immune response by virus</keyword>
<keyword id="KW-1113">Inhibition of host RLR pathway by virus</keyword>
<keyword id="KW-0460">Magnesium</keyword>
<keyword id="KW-0479">Metal-binding</keyword>
<keyword id="KW-0511">Multifunctional enzyme</keyword>
<keyword id="KW-0540">Nuclease</keyword>
<keyword id="KW-0548">Nucleotidyltransferase</keyword>
<keyword id="KW-0695">RNA-directed DNA polymerase</keyword>
<keyword id="KW-0808">Transferase</keyword>
<keyword id="KW-0899">Viral immunoevasion</keyword>
<protein>
    <recommendedName>
        <fullName evidence="1">Protein P</fullName>
    </recommendedName>
    <domain>
        <recommendedName>
            <fullName evidence="1">DNA-directed DNA polymerase</fullName>
            <ecNumber evidence="1">2.7.7.7</ecNumber>
        </recommendedName>
    </domain>
    <domain>
        <recommendedName>
            <fullName evidence="1">RNA-directed DNA polymerase</fullName>
            <ecNumber evidence="1">2.7.7.49</ecNumber>
        </recommendedName>
    </domain>
    <domain>
        <recommendedName>
            <fullName evidence="1">Ribonuclease H</fullName>
            <ecNumber evidence="1">3.1.26.4</ecNumber>
        </recommendedName>
    </domain>
</protein>
<gene>
    <name evidence="1" type="primary">P</name>
</gene>
<evidence type="ECO:0000255" key="1">
    <source>
        <dbReference type="HAMAP-Rule" id="MF_04073"/>
    </source>
</evidence>
<evidence type="ECO:0000256" key="2">
    <source>
        <dbReference type="SAM" id="MobiDB-lite"/>
    </source>
</evidence>
<organism>
    <name type="scientific">Hepatitis B virus genotype A2 subtype adw2 (isolate Germany/991/1990)</name>
    <name type="common">HBV-A</name>
    <dbReference type="NCBI Taxonomy" id="10410"/>
    <lineage>
        <taxon>Viruses</taxon>
        <taxon>Riboviria</taxon>
        <taxon>Pararnavirae</taxon>
        <taxon>Artverviricota</taxon>
        <taxon>Revtraviricetes</taxon>
        <taxon>Blubervirales</taxon>
        <taxon>Hepadnaviridae</taxon>
        <taxon>Orthohepadnavirus</taxon>
        <taxon>Hepatitis B virus</taxon>
    </lineage>
</organism>
<reference key="1">
    <citation type="submission" date="1990-02" db="EMBL/GenBank/DDBJ databases">
        <authorList>
            <person name="Koechel H.G."/>
            <person name="Schueler A."/>
            <person name="Lottmann S."/>
            <person name="Thomssen R."/>
        </authorList>
    </citation>
    <scope>NUCLEOTIDE SEQUENCE [GENOMIC DNA]</scope>
</reference>
<reference key="2">
    <citation type="journal article" date="2007" name="World J. Gastroenterol.">
        <title>Hepatitis B virus replication.</title>
        <authorList>
            <person name="Beck J."/>
            <person name="Nassal M."/>
        </authorList>
    </citation>
    <scope>REVIEW</scope>
</reference>
<comment type="function">
    <text evidence="1">Multifunctional enzyme that converts the viral RNA genome into dsDNA in viral cytoplasmic capsids. This enzyme displays a DNA polymerase activity that can copy either DNA or RNA templates, and a ribonuclease H (RNase H) activity that cleaves the RNA strand of RNA-DNA heteroduplexes in a partially processive 3'- to 5'-endonucleasic mode. Neo-synthesized pregenomic RNA (pgRNA) are encapsidated together with the P protein, and reverse-transcribed inside the nucleocapsid. Initiation of reverse-transcription occurs first by binding the epsilon loop on the pgRNA genome, and is initiated by protein priming, thereby the 5'-end of (-)DNA is covalently linked to P protein. Partial (+)DNA is synthesized from the (-)DNA template and generates the relaxed circular DNA (RC-DNA) genome. After budding and infection, the RC-DNA migrates in the nucleus, and is converted into a plasmid-like covalently closed circular DNA (cccDNA). The activity of P protein does not seem to be necessary for cccDNA generation, and is presumably released from (+)DNA by host nuclear DNA repair machinery.</text>
</comment>
<comment type="catalytic activity">
    <reaction evidence="1">
        <text>DNA(n) + a 2'-deoxyribonucleoside 5'-triphosphate = DNA(n+1) + diphosphate</text>
        <dbReference type="Rhea" id="RHEA:22508"/>
        <dbReference type="Rhea" id="RHEA-COMP:17339"/>
        <dbReference type="Rhea" id="RHEA-COMP:17340"/>
        <dbReference type="ChEBI" id="CHEBI:33019"/>
        <dbReference type="ChEBI" id="CHEBI:61560"/>
        <dbReference type="ChEBI" id="CHEBI:173112"/>
        <dbReference type="EC" id="2.7.7.7"/>
    </reaction>
</comment>
<comment type="catalytic activity">
    <reaction evidence="1">
        <text>DNA(n) + a 2'-deoxyribonucleoside 5'-triphosphate = DNA(n+1) + diphosphate</text>
        <dbReference type="Rhea" id="RHEA:22508"/>
        <dbReference type="Rhea" id="RHEA-COMP:17339"/>
        <dbReference type="Rhea" id="RHEA-COMP:17340"/>
        <dbReference type="ChEBI" id="CHEBI:33019"/>
        <dbReference type="ChEBI" id="CHEBI:61560"/>
        <dbReference type="ChEBI" id="CHEBI:173112"/>
        <dbReference type="EC" id="2.7.7.49"/>
    </reaction>
</comment>
<comment type="catalytic activity">
    <reaction evidence="1">
        <text>Endonucleolytic cleavage to 5'-phosphomonoester.</text>
        <dbReference type="EC" id="3.1.26.4"/>
    </reaction>
</comment>
<comment type="activity regulation">
    <text evidence="1">Activated by host HSP70 and HSP40 in vitro to be able to bind the epsilon loop of the pgRNA. Because deletion of the RNase H region renders the protein partly chaperone-independent, the chaperones may be needed indirectly to relieve occlusion of the RNA-binding site by this domain. Inhibited by several reverse-transcriptase inhibitors: Lamivudine, Adefovir and Entecavir.</text>
</comment>
<comment type="domain">
    <text evidence="1">Terminal protein domain (TP) is hepadnavirus-specific. Spacer domain is highly variable and separates the TP and RT domains. Polymerase/reverse-transcriptase domain (RT) and ribonuclease H domain (RH) are similar to retrovirus reverse transcriptase/RNase H.</text>
</comment>
<comment type="domain">
    <text evidence="1">The polymerase/reverse transcriptase (RT) and ribonuclease H (RH) domains are structured in five subdomains: finger, palm, thumb, connection and RNase H. Within the palm subdomain, the 'primer grip' region is thought to be involved in the positioning of the primer terminus for accommodating the incoming nucleotide. The RH domain stabilizes the association of RT with primer-template.</text>
</comment>
<comment type="miscellaneous">
    <text evidence="1">Hepadnaviral virions contain probably just one P protein molecule per particle.</text>
</comment>
<comment type="similarity">
    <text evidence="1">Belongs to the hepadnaviridae P protein family.</text>
</comment>
<accession>P17100</accession>
<feature type="chain" id="PRO_0000222346" description="Protein P">
    <location>
        <begin position="1"/>
        <end position="845"/>
    </location>
</feature>
<feature type="domain" description="Reverse transcriptase" evidence="1">
    <location>
        <begin position="359"/>
        <end position="602"/>
    </location>
</feature>
<feature type="region of interest" description="Terminal protein domain (TP)" evidence="1">
    <location>
        <begin position="1"/>
        <end position="179"/>
    </location>
</feature>
<feature type="region of interest" description="Spacer" evidence="1">
    <location>
        <begin position="180"/>
        <end position="348"/>
    </location>
</feature>
<feature type="region of interest" description="Disordered" evidence="2">
    <location>
        <begin position="226"/>
        <end position="246"/>
    </location>
</feature>
<feature type="region of interest" description="Polymerase/reverse transcriptase domain (RT)" evidence="1">
    <location>
        <begin position="349"/>
        <end position="692"/>
    </location>
</feature>
<feature type="binding site" evidence="1">
    <location>
        <position position="431"/>
    </location>
    <ligand>
        <name>Mg(2+)</name>
        <dbReference type="ChEBI" id="CHEBI:18420"/>
        <note>catalytic</note>
    </ligand>
</feature>
<feature type="binding site" evidence="1">
    <location>
        <position position="553"/>
    </location>
    <ligand>
        <name>Mg(2+)</name>
        <dbReference type="ChEBI" id="CHEBI:18420"/>
        <note>catalytic</note>
    </ligand>
</feature>
<feature type="binding site" evidence="1">
    <location>
        <position position="554"/>
    </location>
    <ligand>
        <name>Mg(2+)</name>
        <dbReference type="ChEBI" id="CHEBI:18420"/>
        <note>catalytic</note>
    </ligand>
</feature>
<feature type="site" description="Priming of reverse-transcription by covalently linking the first nucleotide of the (-)DNA" evidence="1">
    <location>
        <position position="65"/>
    </location>
</feature>
<name>DPOL_HBVA4</name>
<proteinExistence type="inferred from homology"/>
<sequence>MPLSYQHFRKLLLLDDGTEAGPLEEELPRLADADLNRRVAEDLNLGNLNVSIPWTHKVGNFTGLYSSTAPIFNPEWQTPSFPKIHLQEDIINRCQQFVGPLTVNEKRRLKLIMPARFYPTHTKYLPLDKGIKPYYPDQVVNHYFQTRHYLHTLWKAGILYKRETTRSASFCGSPYSWEQELQHGRLVIKTSQRHGDESFCSQPSGILSRSSVGPCIRSQLKQSRLGLQPHQGPLASSQPGRSGSIRARVHPSTRRCFGVEPSGSGHVDPSVNNSSSCLRQSAVRKAAYSHLSTSKRQSSSGHAVEFHCLPPSSARPQSQGSVFSCWWLQFRNSKPCSEYCLSHLVNLREDRGPCDEHGEHHIRIPRTPARVTGGVFLVDKNPHNTAESRLVVDFSQFSRGITRVSWPKFAIPNLQSLTNLLSSNLSWLSLDVSAAFYHIPLHPAAMPHLLIGSSGLSRYVARLSSNSRINNNQYGTMQNLHDSCSRQLYVSLMLLYKTYGWKLHLYSHPIVLGFRKIPMGVGLSPFLLAQFTSAICSVVRRAFPHCLAFSYMDDVVLGAKSVQHREFLYTAVTNFLLSLGIHLNPNKTKRWGYSLNFMGYVIGSWGTLPQDHIVQKIKHCFRKLPVNRPIDWKVCQRIVGLLGFAAPFTQCGYPALMPLYACIQAKQAFTFSPTYKAFLSKQYMNLYPVARQRPGLCQVFADATPTGWGLAIGHQRMRGTFVAPLPIHTAELLAACFARSRSGAKLIGTDNSVVLSRKYTSFPWLLGCAANWILRGTSFVYVPSALNPADDPSRGRLGLSRPLLRLPFQPTTGRTSLYAVSPSVPSHLPVRVHFASPLHVAWRPP</sequence>
<organismHost>
    <name type="scientific">Homo sapiens</name>
    <name type="common">Human</name>
    <dbReference type="NCBI Taxonomy" id="9606"/>
</organismHost>
<organismHost>
    <name type="scientific">Pan troglodytes</name>
    <name type="common">Chimpanzee</name>
    <dbReference type="NCBI Taxonomy" id="9598"/>
</organismHost>